<gene>
    <name type="primary">scpB</name>
    <name type="ordered locus">CBU_1060</name>
</gene>
<keyword id="KW-0131">Cell cycle</keyword>
<keyword id="KW-0132">Cell division</keyword>
<keyword id="KW-0159">Chromosome partition</keyword>
<keyword id="KW-0963">Cytoplasm</keyword>
<keyword id="KW-1185">Reference proteome</keyword>
<protein>
    <recommendedName>
        <fullName>Segregation and condensation protein B homolog</fullName>
    </recommendedName>
</protein>
<dbReference type="EMBL" id="AE016828">
    <property type="protein sequence ID" value="AAO90574.1"/>
    <property type="molecule type" value="Genomic_DNA"/>
</dbReference>
<dbReference type="RefSeq" id="NP_820060.1">
    <property type="nucleotide sequence ID" value="NC_002971.4"/>
</dbReference>
<dbReference type="RefSeq" id="WP_010957978.1">
    <property type="nucleotide sequence ID" value="NC_002971.4"/>
</dbReference>
<dbReference type="SMR" id="Q83CP9"/>
<dbReference type="STRING" id="227377.CBU_1060"/>
<dbReference type="EnsemblBacteria" id="AAO90574">
    <property type="protein sequence ID" value="AAO90574"/>
    <property type="gene ID" value="CBU_1060"/>
</dbReference>
<dbReference type="GeneID" id="1208961"/>
<dbReference type="KEGG" id="cbu:CBU_1060"/>
<dbReference type="PATRIC" id="fig|227377.7.peg.1051"/>
<dbReference type="eggNOG" id="COG1386">
    <property type="taxonomic scope" value="Bacteria"/>
</dbReference>
<dbReference type="HOGENOM" id="CLU_045647_5_2_6"/>
<dbReference type="OrthoDB" id="9806226at2"/>
<dbReference type="Proteomes" id="UP000002671">
    <property type="component" value="Chromosome"/>
</dbReference>
<dbReference type="GO" id="GO:0005737">
    <property type="term" value="C:cytoplasm"/>
    <property type="evidence" value="ECO:0007669"/>
    <property type="project" value="UniProtKB-SubCell"/>
</dbReference>
<dbReference type="GO" id="GO:0051301">
    <property type="term" value="P:cell division"/>
    <property type="evidence" value="ECO:0007669"/>
    <property type="project" value="UniProtKB-KW"/>
</dbReference>
<dbReference type="GO" id="GO:0051304">
    <property type="term" value="P:chromosome separation"/>
    <property type="evidence" value="ECO:0007669"/>
    <property type="project" value="InterPro"/>
</dbReference>
<dbReference type="Gene3D" id="1.10.10.10">
    <property type="entry name" value="Winged helix-like DNA-binding domain superfamily/Winged helix DNA-binding domain"/>
    <property type="match status" value="2"/>
</dbReference>
<dbReference type="InterPro" id="IPR005234">
    <property type="entry name" value="ScpB_csome_segregation"/>
</dbReference>
<dbReference type="InterPro" id="IPR036388">
    <property type="entry name" value="WH-like_DNA-bd_sf"/>
</dbReference>
<dbReference type="InterPro" id="IPR036390">
    <property type="entry name" value="WH_DNA-bd_sf"/>
</dbReference>
<dbReference type="NCBIfam" id="TIGR00281">
    <property type="entry name" value="SMC-Scp complex subunit ScpB"/>
    <property type="match status" value="1"/>
</dbReference>
<dbReference type="PANTHER" id="PTHR34298">
    <property type="entry name" value="SEGREGATION AND CONDENSATION PROTEIN B"/>
    <property type="match status" value="1"/>
</dbReference>
<dbReference type="PANTHER" id="PTHR34298:SF2">
    <property type="entry name" value="SEGREGATION AND CONDENSATION PROTEIN B"/>
    <property type="match status" value="1"/>
</dbReference>
<dbReference type="Pfam" id="PF04079">
    <property type="entry name" value="SMC_ScpB"/>
    <property type="match status" value="1"/>
</dbReference>
<dbReference type="PIRSF" id="PIRSF019345">
    <property type="entry name" value="ScpB"/>
    <property type="match status" value="1"/>
</dbReference>
<dbReference type="SUPFAM" id="SSF46785">
    <property type="entry name" value="Winged helix' DNA-binding domain"/>
    <property type="match status" value="2"/>
</dbReference>
<accession>Q83CP9</accession>
<feature type="chain" id="PRO_0000322126" description="Segregation and condensation protein B homolog">
    <location>
        <begin position="1"/>
        <end position="209"/>
    </location>
</feature>
<evidence type="ECO:0000269" key="1">
    <source>
    </source>
</evidence>
<evidence type="ECO:0000305" key="2"/>
<reference key="1">
    <citation type="journal article" date="2003" name="Proc. Natl. Acad. Sci. U.S.A.">
        <title>Complete genome sequence of the Q-fever pathogen, Coxiella burnetii.</title>
        <authorList>
            <person name="Seshadri R."/>
            <person name="Paulsen I.T."/>
            <person name="Eisen J.A."/>
            <person name="Read T.D."/>
            <person name="Nelson K.E."/>
            <person name="Nelson W.C."/>
            <person name="Ward N.L."/>
            <person name="Tettelin H."/>
            <person name="Davidsen T.M."/>
            <person name="Beanan M.J."/>
            <person name="DeBoy R.T."/>
            <person name="Daugherty S.C."/>
            <person name="Brinkac L.M."/>
            <person name="Madupu R."/>
            <person name="Dodson R.J."/>
            <person name="Khouri H.M."/>
            <person name="Lee K.H."/>
            <person name="Carty H.A."/>
            <person name="Scanlan D."/>
            <person name="Heinzen R.A."/>
            <person name="Thompson H.A."/>
            <person name="Samuel J.E."/>
            <person name="Fraser C.M."/>
            <person name="Heidelberg J.F."/>
        </authorList>
    </citation>
    <scope>NUCLEOTIDE SEQUENCE [LARGE SCALE GENOMIC DNA]</scope>
    <source>
        <strain>RSA 493 / Nine Mile phase I</strain>
    </source>
</reference>
<reference key="2">
    <citation type="journal article" date="2007" name="Infect. Immun.">
        <title>Proteome and antigen profiling of Coxiella burnetii developmental forms.</title>
        <authorList>
            <person name="Coleman S.A."/>
            <person name="Fischer E.R."/>
            <person name="Cockrell D.C."/>
            <person name="Voth D.E."/>
            <person name="Howe D."/>
            <person name="Mead D.J."/>
            <person name="Samuel J.E."/>
            <person name="Heinzen R.A."/>
        </authorList>
    </citation>
    <scope>IDENTIFICATION BY MASS SPECTROMETRY</scope>
    <scope>DEVELOPMENTAL STAGE</scope>
    <source>
        <strain>Nine Mile Crazy / RSA 514</strain>
    </source>
</reference>
<sequence>MSEVNPKIVIEAALFASAEPLTPERLQQLFDEQNPISLSEIKNLLSELKEDYRERGVDLQEVASGYRFQARPDFSPWLQRLWEKKPARYSRALLETLALIVYRQPISRGEIEEVRGVAVSSDIIKKLLDREWISVVAHRDVPGKPALFGTTKTFLDYFNLKSLEELPPLEDVVDLEKIEAQFGEQLALVVEKKAAEGTEPSALPLAEED</sequence>
<comment type="function">
    <text evidence="2">May participate in chromosomal partitioning during cell division.</text>
</comment>
<comment type="subcellular location">
    <subcellularLocation>
        <location evidence="2">Cytoplasm</location>
    </subcellularLocation>
</comment>
<comment type="developmental stage">
    <text evidence="1">More than twofold more abundant in the large cell variant (LCV) stage than in the small cell variant (SCV) stage (at protein level). LCVs are more metabolically active than SCVs.</text>
</comment>
<comment type="similarity">
    <text evidence="2">Belongs to the ScpB family.</text>
</comment>
<organism>
    <name type="scientific">Coxiella burnetii (strain RSA 493 / Nine Mile phase I)</name>
    <dbReference type="NCBI Taxonomy" id="227377"/>
    <lineage>
        <taxon>Bacteria</taxon>
        <taxon>Pseudomonadati</taxon>
        <taxon>Pseudomonadota</taxon>
        <taxon>Gammaproteobacteria</taxon>
        <taxon>Legionellales</taxon>
        <taxon>Coxiellaceae</taxon>
        <taxon>Coxiella</taxon>
    </lineage>
</organism>
<name>SCPBL_COXBU</name>
<proteinExistence type="evidence at protein level"/>